<organism>
    <name type="scientific">Equine herpesvirus 1 (strain Ab4p)</name>
    <name type="common">EHV-1</name>
    <name type="synonym">Equine abortion virus</name>
    <dbReference type="NCBI Taxonomy" id="31520"/>
    <lineage>
        <taxon>Viruses</taxon>
        <taxon>Duplodnaviria</taxon>
        <taxon>Heunggongvirae</taxon>
        <taxon>Peploviricota</taxon>
        <taxon>Herviviricetes</taxon>
        <taxon>Herpesvirales</taxon>
        <taxon>Orthoherpesviridae</taxon>
        <taxon>Alphaherpesvirinae</taxon>
        <taxon>Varicellovirus</taxon>
        <taxon>Varicellovirus equidalpha1</taxon>
        <taxon>Equid alphaherpesvirus 1</taxon>
    </lineage>
</organism>
<name>GD_EHV1B</name>
<feature type="signal peptide" evidence="4">
    <location>
        <begin position="1"/>
        <end position="19"/>
    </location>
</feature>
<feature type="chain" id="PRO_0000038222" description="Envelope glycoprotein D">
    <location>
        <begin position="20"/>
        <end position="452"/>
    </location>
</feature>
<feature type="topological domain" description="Virion surface" evidence="4">
    <location>
        <begin position="20"/>
        <end position="405"/>
    </location>
</feature>
<feature type="transmembrane region" description="Helical" evidence="4">
    <location>
        <begin position="406"/>
        <end position="422"/>
    </location>
</feature>
<feature type="topological domain" description="Intravirion" evidence="4">
    <location>
        <begin position="423"/>
        <end position="452"/>
    </location>
</feature>
<feature type="region of interest" description="Disordered" evidence="5">
    <location>
        <begin position="331"/>
        <end position="365"/>
    </location>
</feature>
<feature type="glycosylation site" description="N-linked (GlcNAc...) asparagine; by host" evidence="4">
    <location>
        <position position="103"/>
    </location>
</feature>
<feature type="glycosylation site" description="N-linked (GlcNAc...) asparagine; by host" evidence="4">
    <location>
        <position position="111"/>
    </location>
</feature>
<feature type="glycosylation site" description="N-linked (GlcNAc...) asparagine; by host" evidence="4">
    <location>
        <position position="347"/>
    </location>
</feature>
<feature type="glycosylation site" description="N-linked (GlcNAc...) asparagine; by host" evidence="4">
    <location>
        <position position="396"/>
    </location>
</feature>
<feature type="disulfide bond" evidence="1">
    <location>
        <begin position="138"/>
        <end position="259"/>
    </location>
</feature>
<feature type="disulfide bond" evidence="1">
    <location>
        <begin position="176"/>
        <end position="273"/>
    </location>
</feature>
<feature type="disulfide bond" evidence="1">
    <location>
        <begin position="188"/>
        <end position="197"/>
    </location>
</feature>
<protein>
    <recommendedName>
        <fullName>Envelope glycoprotein D</fullName>
        <shortName>gD</shortName>
    </recommendedName>
    <alternativeName>
        <fullName>Glycoprotein 17/18</fullName>
    </alternativeName>
</protein>
<proteinExistence type="inferred from homology"/>
<accession>Q6DLD9</accession>
<accession>P24379</accession>
<comment type="function">
    <text evidence="2">Envelope glycoprotein that binds to host cell entry receptors, promoting the virus entry into host cells. May trigger fusion with host membrane, by recruiting the fusion machinery composed of gB and gH/gL (By similarity).</text>
</comment>
<comment type="subcellular location">
    <subcellularLocation>
        <location evidence="2">Virion membrane</location>
        <topology evidence="2">Single-pass type I membrane protein</topology>
    </subcellularLocation>
    <text evidence="3">During virion morphogenesis, this protein probably accumulates in the endosomes and trans-Golgi where secondary envelopment occurs.</text>
</comment>
<comment type="similarity">
    <text evidence="6">Belongs to the herpesviridae glycoprotein D family.</text>
</comment>
<comment type="caution">
    <text evidence="6">It is uncertain whether Met-1 or Met-51 is the initiator.</text>
</comment>
<reference key="1">
    <citation type="journal article" date="1992" name="Virology">
        <title>The DNA sequence of equine herpesvirus-1.</title>
        <authorList>
            <person name="Telford E.A.R."/>
            <person name="Watson M.S."/>
            <person name="McBride K."/>
            <person name="Davison A.J."/>
        </authorList>
    </citation>
    <scope>NUCLEOTIDE SEQUENCE [LARGE SCALE GENOMIC DNA]</scope>
</reference>
<gene>
    <name type="primary">gD</name>
    <name type="synonym">GP17/18</name>
    <name type="ordered locus">72</name>
</gene>
<evidence type="ECO:0000250" key="1">
    <source>
        <dbReference type="UniProtKB" id="P57083"/>
    </source>
</evidence>
<evidence type="ECO:0000250" key="2">
    <source>
        <dbReference type="UniProtKB" id="Q05059"/>
    </source>
</evidence>
<evidence type="ECO:0000250" key="3">
    <source>
        <dbReference type="UniProtKB" id="Q69091"/>
    </source>
</evidence>
<evidence type="ECO:0000255" key="4"/>
<evidence type="ECO:0000256" key="5">
    <source>
        <dbReference type="SAM" id="MobiDB-lite"/>
    </source>
</evidence>
<evidence type="ECO:0000305" key="6"/>
<dbReference type="EMBL" id="AY665713">
    <property type="protein sequence ID" value="AAT67329.1"/>
    <property type="molecule type" value="Genomic_DNA"/>
</dbReference>
<dbReference type="PIR" id="I36802">
    <property type="entry name" value="VGBEG3"/>
</dbReference>
<dbReference type="SMR" id="Q6DLD9"/>
<dbReference type="GlyCosmos" id="Q6DLD9">
    <property type="glycosylation" value="4 sites, No reported glycans"/>
</dbReference>
<dbReference type="Proteomes" id="UP000001189">
    <property type="component" value="Segment"/>
</dbReference>
<dbReference type="GO" id="GO:0016020">
    <property type="term" value="C:membrane"/>
    <property type="evidence" value="ECO:0007669"/>
    <property type="project" value="UniProtKB-KW"/>
</dbReference>
<dbReference type="GO" id="GO:0019031">
    <property type="term" value="C:viral envelope"/>
    <property type="evidence" value="ECO:0007669"/>
    <property type="project" value="UniProtKB-KW"/>
</dbReference>
<dbReference type="GO" id="GO:0055036">
    <property type="term" value="C:virion membrane"/>
    <property type="evidence" value="ECO:0007669"/>
    <property type="project" value="UniProtKB-SubCell"/>
</dbReference>
<dbReference type="GO" id="GO:0098670">
    <property type="term" value="P:entry receptor-mediated virion attachment to host cell"/>
    <property type="evidence" value="ECO:0007669"/>
    <property type="project" value="UniProtKB-KW"/>
</dbReference>
<dbReference type="GO" id="GO:0046718">
    <property type="term" value="P:symbiont entry into host cell"/>
    <property type="evidence" value="ECO:0007669"/>
    <property type="project" value="UniProtKB-KW"/>
</dbReference>
<dbReference type="CDD" id="cd12087">
    <property type="entry name" value="TM_EGFR-like"/>
    <property type="match status" value="1"/>
</dbReference>
<dbReference type="Gene3D" id="2.70.230.10">
    <property type="match status" value="1"/>
</dbReference>
<dbReference type="InterPro" id="IPR002896">
    <property type="entry name" value="Herpes_glycop_dom"/>
</dbReference>
<dbReference type="InterPro" id="IPR036179">
    <property type="entry name" value="Ig-like_dom_sf"/>
</dbReference>
<dbReference type="Pfam" id="PF01537">
    <property type="entry name" value="Herpes_glycop_D"/>
    <property type="match status" value="1"/>
</dbReference>
<dbReference type="SUPFAM" id="SSF48726">
    <property type="entry name" value="Immunoglobulin"/>
    <property type="match status" value="1"/>
</dbReference>
<keyword id="KW-1015">Disulfide bond</keyword>
<keyword id="KW-0325">Glycoprotein</keyword>
<keyword id="KW-0945">Host-virus interaction</keyword>
<keyword id="KW-0472">Membrane</keyword>
<keyword id="KW-1185">Reference proteome</keyword>
<keyword id="KW-0732">Signal</keyword>
<keyword id="KW-0812">Transmembrane</keyword>
<keyword id="KW-1133">Transmembrane helix</keyword>
<keyword id="KW-1161">Viral attachment to host cell</keyword>
<keyword id="KW-1234">Viral attachment to host entry receptor</keyword>
<keyword id="KW-0261">Viral envelope protein</keyword>
<keyword id="KW-0946">Virion</keyword>
<keyword id="KW-1160">Virus entry into host cell</keyword>
<sequence>MPAVLLVLYVNPPPSVCILTQKLSLGLYNQWWRVCRSVPPPWYVFFNKRSMSTFKLMMDGRLVFAMAIAILSVVLSCGTCEKAKRAVRGRQDRPKEFPPPRYNYTILTRYNATALASPFINDQVKNVDLRIVTATRPCEMIALIAKTNIDSILKELAAAQKTYSARLTWFKIMPTCATPIHDVSYMKCNPKLSFAMCDERSDILWQASLITMAAETDDELGLVLAAPAHSASGLYRRVIEIDGRRIYTDFSVTIPSERCPIAFEQNFGNPDRCKTPEQYSRGEVFTRRFLGEFNFPQGEHMTWLKFWFVYDGGNLPVQFYEAQAFARPVPPDNHPGFDSVESEITQNKTDPKPGQADPKPNQPFKWPSIKHLAPRLDEVDEVIEPVTKPPKTSKSNSTFVGISVGLGIAGLVLVGVILYVCLRRKKELKKSAQNGLTRLRSTFKDVKYTQLP</sequence>
<organismHost>
    <name type="scientific">Equus caballus</name>
    <name type="common">Horse</name>
    <dbReference type="NCBI Taxonomy" id="9796"/>
</organismHost>